<evidence type="ECO:0000255" key="1">
    <source>
        <dbReference type="HAMAP-Rule" id="MF_01866"/>
    </source>
</evidence>
<gene>
    <name evidence="1" type="primary">ycgL</name>
    <name type="ordered locus">ECDH10B_1232</name>
</gene>
<organism>
    <name type="scientific">Escherichia coli (strain K12 / DH10B)</name>
    <dbReference type="NCBI Taxonomy" id="316385"/>
    <lineage>
        <taxon>Bacteria</taxon>
        <taxon>Pseudomonadati</taxon>
        <taxon>Pseudomonadota</taxon>
        <taxon>Gammaproteobacteria</taxon>
        <taxon>Enterobacterales</taxon>
        <taxon>Enterobacteriaceae</taxon>
        <taxon>Escherichia</taxon>
    </lineage>
</organism>
<proteinExistence type="inferred from homology"/>
<dbReference type="EMBL" id="CP000948">
    <property type="protein sequence ID" value="ACB02349.1"/>
    <property type="molecule type" value="Genomic_DNA"/>
</dbReference>
<dbReference type="SMR" id="B1XA66"/>
<dbReference type="KEGG" id="ecd:ECDH10B_1232"/>
<dbReference type="HOGENOM" id="CLU_155118_1_0_6"/>
<dbReference type="Gene3D" id="3.10.510.20">
    <property type="entry name" value="YcgL domain"/>
    <property type="match status" value="1"/>
</dbReference>
<dbReference type="HAMAP" id="MF_01866">
    <property type="entry name" value="UPF0745"/>
    <property type="match status" value="1"/>
</dbReference>
<dbReference type="InterPro" id="IPR038068">
    <property type="entry name" value="YcgL-like_sf"/>
</dbReference>
<dbReference type="InterPro" id="IPR027354">
    <property type="entry name" value="YcgL_dom"/>
</dbReference>
<dbReference type="PANTHER" id="PTHR38109">
    <property type="entry name" value="PROTEIN YCGL"/>
    <property type="match status" value="1"/>
</dbReference>
<dbReference type="PANTHER" id="PTHR38109:SF1">
    <property type="entry name" value="PROTEIN YCGL"/>
    <property type="match status" value="1"/>
</dbReference>
<dbReference type="Pfam" id="PF05166">
    <property type="entry name" value="YcgL"/>
    <property type="match status" value="1"/>
</dbReference>
<dbReference type="SUPFAM" id="SSF160191">
    <property type="entry name" value="YcgL-like"/>
    <property type="match status" value="1"/>
</dbReference>
<dbReference type="PROSITE" id="PS51648">
    <property type="entry name" value="YCGL"/>
    <property type="match status" value="1"/>
</dbReference>
<name>YCGL_ECODH</name>
<feature type="chain" id="PRO_0000375291" description="Protein YcgL">
    <location>
        <begin position="1"/>
        <end position="108"/>
    </location>
</feature>
<feature type="domain" description="YcgL" evidence="1">
    <location>
        <begin position="12"/>
        <end position="96"/>
    </location>
</feature>
<protein>
    <recommendedName>
        <fullName evidence="1">Protein YcgL</fullName>
    </recommendedName>
</protein>
<reference key="1">
    <citation type="journal article" date="2008" name="J. Bacteriol.">
        <title>The complete genome sequence of Escherichia coli DH10B: insights into the biology of a laboratory workhorse.</title>
        <authorList>
            <person name="Durfee T."/>
            <person name="Nelson R."/>
            <person name="Baldwin S."/>
            <person name="Plunkett G. III"/>
            <person name="Burland V."/>
            <person name="Mau B."/>
            <person name="Petrosino J.F."/>
            <person name="Qin X."/>
            <person name="Muzny D.M."/>
            <person name="Ayele M."/>
            <person name="Gibbs R.A."/>
            <person name="Csorgo B."/>
            <person name="Posfai G."/>
            <person name="Weinstock G.M."/>
            <person name="Blattner F.R."/>
        </authorList>
    </citation>
    <scope>NUCLEOTIDE SEQUENCE [LARGE SCALE GENOMIC DNA]</scope>
    <source>
        <strain>K12 / DH10B</strain>
    </source>
</reference>
<sequence>MPKPGILKSKSMFCVIYRSSKRDQTYLYVEKKDDFSRVPEELMKGFGQPQLAMILPLDGRKKLVNADIEKVKQALTEQGYYLQLPPPPEDLLKQHLSVMGQKTDDTNK</sequence>
<accession>B1XA66</accession>